<evidence type="ECO:0000250" key="1">
    <source>
        <dbReference type="UniProtKB" id="Q0VBL6"/>
    </source>
</evidence>
<evidence type="ECO:0000250" key="2">
    <source>
        <dbReference type="UniProtKB" id="Q9JHS2"/>
    </source>
</evidence>
<evidence type="ECO:0000255" key="3">
    <source>
        <dbReference type="PROSITE-ProRule" id="PRU00140"/>
    </source>
</evidence>
<evidence type="ECO:0000255" key="4">
    <source>
        <dbReference type="PROSITE-ProRule" id="PRU00981"/>
    </source>
</evidence>
<evidence type="ECO:0000256" key="5">
    <source>
        <dbReference type="SAM" id="MobiDB-lite"/>
    </source>
</evidence>
<evidence type="ECO:0000269" key="6">
    <source>
    </source>
</evidence>
<evidence type="ECO:0000269" key="7">
    <source>
    </source>
</evidence>
<evidence type="ECO:0000269" key="8">
    <source>
    </source>
</evidence>
<evidence type="ECO:0000269" key="9">
    <source>
    </source>
</evidence>
<evidence type="ECO:0000269" key="10">
    <source>
    </source>
</evidence>
<evidence type="ECO:0000269" key="11">
    <source>
    </source>
</evidence>
<evidence type="ECO:0000269" key="12">
    <source>
    </source>
</evidence>
<evidence type="ECO:0000269" key="13">
    <source>
    </source>
</evidence>
<evidence type="ECO:0000269" key="14">
    <source>
    </source>
</evidence>
<evidence type="ECO:0000303" key="15">
    <source>
    </source>
</evidence>
<evidence type="ECO:0000303" key="16">
    <source>
    </source>
</evidence>
<evidence type="ECO:0000303" key="17">
    <source>
    </source>
</evidence>
<evidence type="ECO:0000303" key="18">
    <source>
    </source>
</evidence>
<evidence type="ECO:0000303" key="19">
    <source>
    </source>
</evidence>
<evidence type="ECO:0000303" key="20">
    <source ref="2"/>
</evidence>
<evidence type="ECO:0000303" key="21">
    <source ref="4"/>
</evidence>
<evidence type="ECO:0000305" key="22"/>
<evidence type="ECO:0000312" key="23">
    <source>
        <dbReference type="HGNC" id="HGNC:15825"/>
    </source>
</evidence>
<evidence type="ECO:0007829" key="24">
    <source>
        <dbReference type="PDB" id="4WN5"/>
    </source>
</evidence>
<comment type="function">
    <text evidence="1 6 9 12 13 14">Acts as a transcriptional regulator in adaptive response to low oxygen tension. Acts as a regulator of hypoxia-inducible gene expression (PubMed:11573933, PubMed:16126907, PubMed:19694616, PubMed:20416395, PubMed:21069422). Functions as an inhibitor of angiogenesis in hypoxic cells of the cornea. Plays a role in the development of the cardiorespiratory system. May also be involved in apoptosis (By similarity).</text>
</comment>
<comment type="function">
    <molecule>Isoform 2</molecule>
    <text evidence="6">Attenuates the ability of transcription factor HIF1A to bind to hypoxia-responsive elements (HRE) located within the enhancer/promoter of hypoxia-inducible target genes and hence inhibits HRE-driven transcriptional activation. Also inhibits hypoxia-inducible ARNT-mediated gene expression.</text>
</comment>
<comment type="function">
    <molecule>Isoform 3</molecule>
    <text evidence="12 13 14">Attenuates the ability of transcription factor HIF1A to bind to hypoxia-responsive elements (HRE) located within the enhancer/promoter of hypoxia-inducible target genes and hence inhibits HRE-driven transcriptional activation.</text>
</comment>
<comment type="function">
    <molecule>Isoform 4</molecule>
    <text evidence="9 11 12 13">Attenuates the ability of transcription factor HIF1A and EPAS1/HIF2A to bind to hypoxia-responsive elements (HRE) located within the enhancer/promoter of hypoxia-inducible target genes and hence inhibits HRE-driven transcriptional activation (PubMed:16126907, PubMed:17998805, PubMed:19694616, PubMed:20416395). May act as a tumor suppressor and inhibits malignant cell transformation (PubMed:17998805).</text>
</comment>
<comment type="function">
    <molecule>Isoform 5</molecule>
    <text evidence="14">Attenuates the ability of transcription factor HIF1A to bind to hypoxia-responsive elements (HRE) located within the enhancer/promoter of hypoxia-inducible target genes and hence inhibits HRE-driven transcriptional activation.</text>
</comment>
<comment type="subunit">
    <text evidence="1 7 9 11">Isoform 2 interacts (via ODD domain) with VHL (via beta domain) (PubMed:12538644). Isoform 4 interacts with HIF1A; the interaction inhibits the binding of HIF1A to hypoxia-responsive element (HRE) and HIF1A/ARNT-dependent transcriptional activation (PubMed:16126907). Isoform 4 interacts with ARNT; the interaction occurs in a HIF1A- and DNA-binding-independent manner and does not induce HIF1A/ARNT-dependent transcriptional activation (PubMed:16126907). Isoform 4 interacts with EPAS1 (PubMed:17998805). Interacts with BAD, BCL2L2 and MCL1 (By similarity).</text>
</comment>
<comment type="interaction">
    <interactant intactId="EBI-38258397">
        <id>Q9Y2N7-4</id>
    </interactant>
    <interactant intactId="EBI-447269">
        <id>Q16665</id>
        <label>HIF1A</label>
    </interactant>
    <organismsDiffer>false</organismsDiffer>
    <experiments>2</experiments>
</comment>
<comment type="subcellular location">
    <subcellularLocation>
        <location evidence="10 12">Nucleus</location>
    </subcellularLocation>
    <subcellularLocation>
        <location evidence="12">Cytoplasm</location>
    </subcellularLocation>
    <subcellularLocation>
        <location evidence="1">Nucleus speckle</location>
    </subcellularLocation>
    <subcellularLocation>
        <location evidence="1">Mitochondrion</location>
    </subcellularLocation>
    <text evidence="1 2 12">In the nuclei of all periportal and perivenous hepatocytes. In the distal perivenous zone, detected in the cytoplasm of the hepatocytes. Shuttles between the nucleus and the cytoplasm in a CRM1-dependent manner. Colocalizes with BAD in the cytoplasm. Colocalizes with EPAS1 and HIF1A in the nucleus and speckles (By similarity). Localized in the cytoplasm and nuclei under normoxia, but increased in the nucleus under hypoxic conditions (PubMed:19694616). Colocalized with HIF1A in kidney tumors (PubMed:19694616).</text>
</comment>
<comment type="alternative products">
    <event type="alternative splicing"/>
    <isoform>
        <id>Q9Y2N7-1</id>
        <name>1</name>
        <sequence type="displayed"/>
    </isoform>
    <isoform>
        <id>Q9Y2N7-2</id>
        <name>2</name>
        <name evidence="16">HIF-3alpha1</name>
        <sequence type="described" ref="VSP_024520"/>
    </isoform>
    <isoform>
        <id>Q9Y2N7-3</id>
        <name>3</name>
        <name evidence="16">HIF-3alpha2</name>
        <sequence type="described" ref="VSP_024526"/>
    </isoform>
    <isoform>
        <id>Q9Y2N7-4</id>
        <name>4</name>
        <name evidence="16">HIF-3alpha4</name>
        <sequence type="described" ref="VSP_024523 VSP_024525"/>
    </isoform>
    <isoform>
        <id>Q9Y2N7-5</id>
        <name>5</name>
        <name evidence="16">HIF-3alpha3</name>
        <sequence type="described" ref="VSP_024519"/>
    </isoform>
    <isoform>
        <id>Q9Y2N7-6</id>
        <name>6</name>
        <name evidence="16">HIF-3alpha6</name>
        <sequence type="described" ref="VSP_024518 VSP_024521"/>
    </isoform>
    <isoform>
        <id>Q9Y2N7-7</id>
        <name>7</name>
        <sequence type="described" ref="VSP_043429"/>
    </isoform>
    <text evidence="16 19">Additional isoforms seem to exist.</text>
</comment>
<comment type="tissue specificity">
    <text evidence="6 7 9 10 12 13 14">Expressed in vascular cells (at protein level) (PubMed:21069422). Expressed in kidney (PubMed:11573933, PubMed:19694616). Expressed in lung epithelial cells (PubMed:16775626). Expressed in endothelial cells (venous and arterial cells from umbilical cord and aortic endothelial cells) and in vascular smooth muscle cells (aorta) (PubMed:21069422). Strongly expressed in the heart, placenta, and skeletal muscle, whereas a weak expression profile was found in the lung, liver, and kidney (PubMed:12538644). Expressed weakly in cell renal cell carcinoma (CC-RCC) compared to normal renal cells (PubMed:16126907). Expression is down-regulated in numerous kidney tumor cells compared to non tumor kidney tissues (PubMed:16126907). Isoform 2 is expressed in heart, placenta, lung, liver, skeletal muscle and pancreas and in numerous cancer cell lines (PubMed:20416395). Isoform 3 and isoform 4 are weakly expressed in heart, placenta, lung, liver, skeletal muscle and pancreas (PubMed:20416395). Isoform 4 is expressed in fetal tissues, such as heart, brain, thymus, lung, liver, skeletal kidney and spleen (PubMed:20416395). Isoform 3 is weakly expressed in fetal tissues, such as liver and kidney (PubMed:20416395).</text>
</comment>
<comment type="induction">
    <text evidence="9 10 12 13 14">Up-regulated by hypoxia (at protein level) (PubMed:16775626). Induced by hypoxia (PubMed:16775626). Isoform 2, isoform 3, isoform 4 and isoform 5 are up-regulated by hypoxia in a HIF1A- and EPAS1/HIF2A-dependent manner (PubMed:19694616, PubMed:20416395, PubMed:21069422). Isoform 4 is down-regulated by hypoxia and up-regulated upon restoring normoxia in embryonic kidney cells (PubMed:16126907).</text>
</comment>
<comment type="PTM">
    <text evidence="7">In normoxia, hydroxylated on Pro-492 in the oxygen-dependent degradation domain (ODD) by prolyl hydroxylase(s) (PHD). The hydroxylated proline promotes interaction with VHL, initiating rapid ubiquitination and subsequent proteasomal degradation.</text>
</comment>
<comment type="PTM">
    <text evidence="7">Ubiquitinated; ubiquitination occurs in a VHL- and oxygen-dependent pathway and subsequently targeted for proteasomal degradation.</text>
</comment>
<comment type="miscellaneous">
    <molecule>Isoform 5</molecule>
    <text evidence="22">Incomplete sequence.</text>
</comment>
<comment type="miscellaneous">
    <molecule>Isoform 6</molecule>
    <text evidence="22">Incomplete sequence.</text>
</comment>
<comment type="sequence caution" evidence="22">
    <conflict type="miscellaneous discrepancy">
        <sequence resource="EMBL-CDS" id="AAL69947"/>
    </conflict>
    <text>Intron retention.</text>
</comment>
<comment type="sequence caution" evidence="22">
    <conflict type="miscellaneous discrepancy">
        <sequence resource="EMBL-CDS" id="BAB13865"/>
    </conflict>
    <text>Aberrant splicing site.</text>
</comment>
<comment type="sequence caution" evidence="22">
    <conflict type="miscellaneous discrepancy">
        <sequence resource="EMBL-CDS" id="BAB14824"/>
    </conflict>
    <text>Unlikely isoform. Aberrant splice sites.</text>
</comment>
<comment type="sequence caution" evidence="22">
    <conflict type="miscellaneous discrepancy">
        <sequence resource="EMBL-CDS" id="BAB55324"/>
    </conflict>
    <text>Intron retention.</text>
</comment>
<comment type="sequence caution" evidence="22">
    <conflict type="miscellaneous discrepancy">
        <sequence resource="EMBL-CDS" id="BAD93355"/>
    </conflict>
    <text>Intron retention.</text>
</comment>
<comment type="sequence caution" evidence="22">
    <conflict type="miscellaneous discrepancy">
        <sequence resource="EMBL-CDS" id="BAG07185"/>
    </conflict>
    <text>Intron retention.</text>
</comment>
<comment type="online information" name="Wikipedia">
    <link uri="https://en.wikipedia.org/wiki/Hypoxia_inducible_factor"/>
    <text>Hypoxia inducible factor entry</text>
</comment>
<sequence length="669" mass="72433">MALGLQRARSTTELRKEKSRDAARSRRSQETEVLYQLAHTLPFARGVSAHLDKASIMRLTISYLRMHRLCAAGEWNQVGAGGEPLDACYLKALEGFVMVLTAEGDMAYLSENVSKHLGLSQLELIGHSIFDFIHPCDQEELQDALTPQQTLSRRKVEAPTERCFSLRMKSTLTSRGRTLNLKAATWKVLNCSGHMRAYKPPAQTSPAGSPDSEPPLQCLVLICEAIPHPGSLEPPLGRGAFLSRHSLDMKFTYCDDRIAEVAGYSPDDLIGCSAYEYIHALDSDAVSKSIHTLLSKGQAVTGQYRFLARSGGYLWTQTQATVVSGGRGPQSESIVCVHFLISQVEETGVVLSLEQTEQHSRRPIQRGAPSQKDTPNPGDSLDTPGPRILAFLHPPSLSEAALAADPRRFCSPDLRRLLGPILDGASVAATPSTPLATRHPQSPLSADLPDELPVGTENVHRLFTSGKDTEAVETDLDIAQDADALDLEMLAPYISMDDDFQLNASEQLPRAYHRPLGAVPRPRARSFHGLSPPALEPSLLPRWGSDPRLSCSSPSRGDPSASSPMAGARKRTLAQSSEDEDEGVELLGVRPPKRSPSPEHENFLLFPLSLSFLLTGGPAPGSLQDPSTPLLNLNEPLGLGPSLLSPYSDEDTTQPGGPFQPRAGSAQAD</sequence>
<gene>
    <name evidence="23" type="primary">HIF3A</name>
    <name type="synonym">BHLHE17</name>
    <name type="synonym">MOP7</name>
    <name type="synonym">PASD7</name>
</gene>
<accession>Q9Y2N7</accession>
<accession>B0M185</accession>
<accession>B4DNA2</accession>
<accession>I6L988</accession>
<accession>Q58A43</accession>
<accession>Q66K72</accession>
<accession>Q8WXA1</accession>
<accession>Q96K34</accession>
<accession>Q9H7Z9</accession>
<accession>Q9HAI2</accession>
<protein>
    <recommendedName>
        <fullName evidence="15">Hypoxia-inducible factor 3-alpha</fullName>
        <shortName evidence="15">HIF-3-alpha</shortName>
        <shortName>HIF3-alpha</shortName>
    </recommendedName>
    <alternativeName>
        <fullName>Basic-helix-loop-helix-PAS protein MOP7</fullName>
    </alternativeName>
    <alternativeName>
        <fullName>Class E basic helix-loop-helix protein 17</fullName>
        <shortName>bHLHe17</shortName>
    </alternativeName>
    <alternativeName>
        <fullName>HIF3-alpha-1</fullName>
    </alternativeName>
    <alternativeName>
        <fullName>Inhibitory PAS domain protein</fullName>
        <shortName>IPAS</shortName>
    </alternativeName>
    <alternativeName>
        <fullName>Member of PAS protein 7</fullName>
    </alternativeName>
    <alternativeName>
        <fullName>PAS domain-containing protein 7</fullName>
    </alternativeName>
</protein>
<proteinExistence type="evidence at protein level"/>
<name>HIF3A_HUMAN</name>
<dbReference type="EMBL" id="AB054067">
    <property type="protein sequence ID" value="BAB69689.1"/>
    <property type="molecule type" value="mRNA"/>
</dbReference>
<dbReference type="EMBL" id="AF463492">
    <property type="protein sequence ID" value="AAL69947.1"/>
    <property type="status" value="ALT_SEQ"/>
    <property type="molecule type" value="mRNA"/>
</dbReference>
<dbReference type="EMBL" id="AB118749">
    <property type="protein sequence ID" value="BAD93355.1"/>
    <property type="status" value="ALT_SEQ"/>
    <property type="molecule type" value="mRNA"/>
</dbReference>
<dbReference type="EMBL" id="AB295039">
    <property type="protein sequence ID" value="BAG07185.1"/>
    <property type="status" value="ALT_SEQ"/>
    <property type="molecule type" value="mRNA"/>
</dbReference>
<dbReference type="EMBL" id="AK021653">
    <property type="protein sequence ID" value="BAB13865.1"/>
    <property type="status" value="ALT_SEQ"/>
    <property type="molecule type" value="mRNA"/>
</dbReference>
<dbReference type="EMBL" id="AK024095">
    <property type="protein sequence ID" value="BAB14824.1"/>
    <property type="status" value="ALT_SEQ"/>
    <property type="molecule type" value="mRNA"/>
</dbReference>
<dbReference type="EMBL" id="AK027725">
    <property type="protein sequence ID" value="BAB55324.1"/>
    <property type="status" value="ALT_SEQ"/>
    <property type="molecule type" value="mRNA"/>
</dbReference>
<dbReference type="EMBL" id="AK297828">
    <property type="protein sequence ID" value="BAG60164.1"/>
    <property type="molecule type" value="mRNA"/>
</dbReference>
<dbReference type="EMBL" id="AC007193">
    <property type="protein sequence ID" value="AAD22668.1"/>
    <property type="molecule type" value="Genomic_DNA"/>
</dbReference>
<dbReference type="EMBL" id="CH471126">
    <property type="protein sequence ID" value="EAW57410.1"/>
    <property type="molecule type" value="Genomic_DNA"/>
</dbReference>
<dbReference type="EMBL" id="BC026308">
    <property type="protein sequence ID" value="AAH26308.1"/>
    <property type="molecule type" value="mRNA"/>
</dbReference>
<dbReference type="EMBL" id="BC080551">
    <property type="protein sequence ID" value="AAH80551.1"/>
    <property type="molecule type" value="mRNA"/>
</dbReference>
<dbReference type="CCDS" id="CCDS12681.2">
    <molecule id="Q9Y2N7-1"/>
</dbReference>
<dbReference type="CCDS" id="CCDS12682.1">
    <molecule id="Q9Y2N7-2"/>
</dbReference>
<dbReference type="CCDS" id="CCDS42580.2">
    <molecule id="Q9Y2N7-7"/>
</dbReference>
<dbReference type="PIR" id="JC7771">
    <property type="entry name" value="JC7771"/>
</dbReference>
<dbReference type="RefSeq" id="NP_071907.4">
    <molecule id="Q9Y2N7-7"/>
    <property type="nucleotide sequence ID" value="NM_022462.4"/>
</dbReference>
<dbReference type="RefSeq" id="NP_690007.1">
    <molecule id="Q9Y2N7-2"/>
    <property type="nucleotide sequence ID" value="NM_152794.4"/>
</dbReference>
<dbReference type="RefSeq" id="NP_690008.2">
    <molecule id="Q9Y2N7-1"/>
    <property type="nucleotide sequence ID" value="NM_152795.4"/>
</dbReference>
<dbReference type="RefSeq" id="XP_047295173.1">
    <molecule id="Q9Y2N7-7"/>
    <property type="nucleotide sequence ID" value="XM_047439217.1"/>
</dbReference>
<dbReference type="RefSeq" id="XP_054177731.1">
    <molecule id="Q9Y2N7-7"/>
    <property type="nucleotide sequence ID" value="XM_054321756.1"/>
</dbReference>
<dbReference type="PDB" id="4WN5">
    <property type="method" value="X-ray"/>
    <property type="resolution" value="1.15 A"/>
    <property type="chains" value="A/B=237-347"/>
</dbReference>
<dbReference type="PDBsum" id="4WN5"/>
<dbReference type="SMR" id="Q9Y2N7"/>
<dbReference type="BioGRID" id="122143">
    <property type="interactions" value="5"/>
</dbReference>
<dbReference type="ELM" id="Q9Y2N7"/>
<dbReference type="FunCoup" id="Q9Y2N7">
    <property type="interactions" value="385"/>
</dbReference>
<dbReference type="IntAct" id="Q9Y2N7">
    <property type="interactions" value="3"/>
</dbReference>
<dbReference type="STRING" id="9606.ENSP00000366898"/>
<dbReference type="GlyGen" id="Q9Y2N7">
    <property type="glycosylation" value="1 site"/>
</dbReference>
<dbReference type="iPTMnet" id="Q9Y2N7"/>
<dbReference type="PhosphoSitePlus" id="Q9Y2N7"/>
<dbReference type="BioMuta" id="HIF3A"/>
<dbReference type="DMDM" id="145558932"/>
<dbReference type="jPOST" id="Q9Y2N7"/>
<dbReference type="MassIVE" id="Q9Y2N7"/>
<dbReference type="PaxDb" id="9606-ENSP00000366898"/>
<dbReference type="PeptideAtlas" id="Q9Y2N7"/>
<dbReference type="ProteomicsDB" id="85845">
    <molecule id="Q9Y2N7-1"/>
</dbReference>
<dbReference type="ProteomicsDB" id="85846">
    <molecule id="Q9Y2N7-2"/>
</dbReference>
<dbReference type="ProteomicsDB" id="85847">
    <molecule id="Q9Y2N7-3"/>
</dbReference>
<dbReference type="ProteomicsDB" id="85849">
    <molecule id="Q9Y2N7-5"/>
</dbReference>
<dbReference type="ProteomicsDB" id="85851">
    <molecule id="Q9Y2N7-7"/>
</dbReference>
<dbReference type="Antibodypedia" id="18071">
    <property type="antibodies" value="384 antibodies from 30 providers"/>
</dbReference>
<dbReference type="DNASU" id="64344"/>
<dbReference type="Ensembl" id="ENST00000244303.10">
    <molecule id="Q9Y2N7-7"/>
    <property type="protein sequence ID" value="ENSP00000244303.6"/>
    <property type="gene ID" value="ENSG00000124440.16"/>
</dbReference>
<dbReference type="Ensembl" id="ENST00000300862.7">
    <molecule id="Q9Y2N7-2"/>
    <property type="protein sequence ID" value="ENSP00000300862.3"/>
    <property type="gene ID" value="ENSG00000124440.16"/>
</dbReference>
<dbReference type="Ensembl" id="ENST00000377670.9">
    <molecule id="Q9Y2N7-1"/>
    <property type="protein sequence ID" value="ENSP00000366898.3"/>
    <property type="gene ID" value="ENSG00000124440.16"/>
</dbReference>
<dbReference type="GeneID" id="64344"/>
<dbReference type="KEGG" id="hsa:64344"/>
<dbReference type="MANE-Select" id="ENST00000377670.9">
    <property type="protein sequence ID" value="ENSP00000366898.3"/>
    <property type="RefSeq nucleotide sequence ID" value="NM_152795.4"/>
    <property type="RefSeq protein sequence ID" value="NP_690008.2"/>
</dbReference>
<dbReference type="UCSC" id="uc002peh.3">
    <molecule id="Q9Y2N7-1"/>
    <property type="organism name" value="human"/>
</dbReference>
<dbReference type="AGR" id="HGNC:15825"/>
<dbReference type="CTD" id="64344"/>
<dbReference type="DisGeNET" id="64344"/>
<dbReference type="GeneCards" id="HIF3A"/>
<dbReference type="HGNC" id="HGNC:15825">
    <property type="gene designation" value="HIF3A"/>
</dbReference>
<dbReference type="HPA" id="ENSG00000124440">
    <property type="expression patterns" value="Low tissue specificity"/>
</dbReference>
<dbReference type="MIM" id="609976">
    <property type="type" value="gene"/>
</dbReference>
<dbReference type="neXtProt" id="NX_Q9Y2N7"/>
<dbReference type="OpenTargets" id="ENSG00000124440"/>
<dbReference type="PharmGKB" id="PA29285"/>
<dbReference type="VEuPathDB" id="HostDB:ENSG00000124440"/>
<dbReference type="eggNOG" id="KOG3558">
    <property type="taxonomic scope" value="Eukaryota"/>
</dbReference>
<dbReference type="GeneTree" id="ENSGT00940000161745"/>
<dbReference type="HOGENOM" id="CLU_010044_5_0_1"/>
<dbReference type="InParanoid" id="Q9Y2N7"/>
<dbReference type="OMA" id="AEPRSHF"/>
<dbReference type="OrthoDB" id="6021714at2759"/>
<dbReference type="PAN-GO" id="Q9Y2N7">
    <property type="GO annotations" value="3 GO annotations based on evolutionary models"/>
</dbReference>
<dbReference type="PhylomeDB" id="Q9Y2N7"/>
<dbReference type="TreeFam" id="TF317772"/>
<dbReference type="PathwayCommons" id="Q9Y2N7"/>
<dbReference type="Reactome" id="R-HSA-1234158">
    <molecule id="Q9Y2N7-1"/>
    <property type="pathway name" value="Regulation of gene expression by Hypoxia-inducible Factor"/>
</dbReference>
<dbReference type="Reactome" id="R-HSA-1234176">
    <property type="pathway name" value="Oxygen-dependent proline hydroxylation of Hypoxia-inducible Factor Alpha"/>
</dbReference>
<dbReference type="Reactome" id="R-HSA-452723">
    <property type="pathway name" value="Transcriptional regulation of pluripotent stem cells"/>
</dbReference>
<dbReference type="Reactome" id="R-HSA-8951664">
    <property type="pathway name" value="Neddylation"/>
</dbReference>
<dbReference type="SignaLink" id="Q9Y2N7"/>
<dbReference type="SIGNOR" id="Q9Y2N7"/>
<dbReference type="BioGRID-ORCS" id="64344">
    <property type="hits" value="19 hits in 1154 CRISPR screens"/>
</dbReference>
<dbReference type="CD-CODE" id="804901D1">
    <property type="entry name" value="Nuclear speckle"/>
</dbReference>
<dbReference type="ChiTaRS" id="HIF3A">
    <property type="organism name" value="human"/>
</dbReference>
<dbReference type="GenomeRNAi" id="64344"/>
<dbReference type="Pharos" id="Q9Y2N7">
    <property type="development level" value="Tbio"/>
</dbReference>
<dbReference type="PRO" id="PR:Q9Y2N7"/>
<dbReference type="Proteomes" id="UP000005640">
    <property type="component" value="Chromosome 19"/>
</dbReference>
<dbReference type="RNAct" id="Q9Y2N7">
    <property type="molecule type" value="protein"/>
</dbReference>
<dbReference type="Bgee" id="ENSG00000124440">
    <property type="expression patterns" value="Expressed in mucosa of stomach and 151 other cell types or tissues"/>
</dbReference>
<dbReference type="ExpressionAtlas" id="Q9Y2N7">
    <property type="expression patterns" value="baseline and differential"/>
</dbReference>
<dbReference type="GO" id="GO:0000785">
    <property type="term" value="C:chromatin"/>
    <property type="evidence" value="ECO:0000314"/>
    <property type="project" value="ARUK-UCL"/>
</dbReference>
<dbReference type="GO" id="GO:0005829">
    <property type="term" value="C:cytosol"/>
    <property type="evidence" value="ECO:0000314"/>
    <property type="project" value="HPA"/>
</dbReference>
<dbReference type="GO" id="GO:0005739">
    <property type="term" value="C:mitochondrion"/>
    <property type="evidence" value="ECO:0007669"/>
    <property type="project" value="UniProtKB-SubCell"/>
</dbReference>
<dbReference type="GO" id="GO:0016607">
    <property type="term" value="C:nuclear speck"/>
    <property type="evidence" value="ECO:0007669"/>
    <property type="project" value="UniProtKB-SubCell"/>
</dbReference>
<dbReference type="GO" id="GO:0005654">
    <property type="term" value="C:nucleoplasm"/>
    <property type="evidence" value="ECO:0000314"/>
    <property type="project" value="HPA"/>
</dbReference>
<dbReference type="GO" id="GO:0005886">
    <property type="term" value="C:plasma membrane"/>
    <property type="evidence" value="ECO:0000314"/>
    <property type="project" value="HPA"/>
</dbReference>
<dbReference type="GO" id="GO:0000981">
    <property type="term" value="F:DNA-binding transcription factor activity, RNA polymerase II-specific"/>
    <property type="evidence" value="ECO:0000314"/>
    <property type="project" value="GO_Central"/>
</dbReference>
<dbReference type="GO" id="GO:0046983">
    <property type="term" value="F:protein dimerization activity"/>
    <property type="evidence" value="ECO:0007669"/>
    <property type="project" value="InterPro"/>
</dbReference>
<dbReference type="GO" id="GO:0000978">
    <property type="term" value="F:RNA polymerase II cis-regulatory region sequence-specific DNA binding"/>
    <property type="evidence" value="ECO:0000314"/>
    <property type="project" value="ARUK-UCL"/>
</dbReference>
<dbReference type="GO" id="GO:0000977">
    <property type="term" value="F:RNA polymerase II transcription regulatory region sequence-specific DNA binding"/>
    <property type="evidence" value="ECO:0000318"/>
    <property type="project" value="GO_Central"/>
</dbReference>
<dbReference type="GO" id="GO:0001525">
    <property type="term" value="P:angiogenesis"/>
    <property type="evidence" value="ECO:0007669"/>
    <property type="project" value="UniProtKB-KW"/>
</dbReference>
<dbReference type="GO" id="GO:0006915">
    <property type="term" value="P:apoptotic process"/>
    <property type="evidence" value="ECO:0007669"/>
    <property type="project" value="UniProtKB-KW"/>
</dbReference>
<dbReference type="GO" id="GO:0006357">
    <property type="term" value="P:regulation of transcription by RNA polymerase II"/>
    <property type="evidence" value="ECO:0000314"/>
    <property type="project" value="UniProtKB"/>
</dbReference>
<dbReference type="GO" id="GO:0001666">
    <property type="term" value="P:response to hypoxia"/>
    <property type="evidence" value="ECO:0007669"/>
    <property type="project" value="Ensembl"/>
</dbReference>
<dbReference type="GO" id="GO:0006366">
    <property type="term" value="P:transcription by RNA polymerase II"/>
    <property type="evidence" value="ECO:0007669"/>
    <property type="project" value="Ensembl"/>
</dbReference>
<dbReference type="CDD" id="cd19729">
    <property type="entry name" value="bHLH-PAS_HIF3a_PASD7"/>
    <property type="match status" value="1"/>
</dbReference>
<dbReference type="CDD" id="cd00130">
    <property type="entry name" value="PAS"/>
    <property type="match status" value="2"/>
</dbReference>
<dbReference type="FunFam" id="3.30.450.20:FF:000005">
    <property type="entry name" value="Hypoxia-inducible factor 1 subunit alpha"/>
    <property type="match status" value="1"/>
</dbReference>
<dbReference type="FunFam" id="3.30.450.20:FF:000042">
    <property type="entry name" value="hypoxia-inducible factor 3-alpha isoform X1"/>
    <property type="match status" value="1"/>
</dbReference>
<dbReference type="FunFam" id="4.10.280.10:FF:000076">
    <property type="entry name" value="hypoxia-inducible factor 3-alpha isoform X1"/>
    <property type="match status" value="1"/>
</dbReference>
<dbReference type="Gene3D" id="4.10.280.10">
    <property type="entry name" value="Helix-loop-helix DNA-binding domain"/>
    <property type="match status" value="1"/>
</dbReference>
<dbReference type="Gene3D" id="3.30.450.20">
    <property type="entry name" value="PAS domain"/>
    <property type="match status" value="2"/>
</dbReference>
<dbReference type="IDEAL" id="IID00742"/>
<dbReference type="InterPro" id="IPR011598">
    <property type="entry name" value="bHLH_dom"/>
</dbReference>
<dbReference type="InterPro" id="IPR021537">
    <property type="entry name" value="HIF_alpha-like"/>
</dbReference>
<dbReference type="InterPro" id="IPR036638">
    <property type="entry name" value="HLH_DNA-bd_sf"/>
</dbReference>
<dbReference type="InterPro" id="IPR001610">
    <property type="entry name" value="PAC"/>
</dbReference>
<dbReference type="InterPro" id="IPR000014">
    <property type="entry name" value="PAS"/>
</dbReference>
<dbReference type="InterPro" id="IPR035965">
    <property type="entry name" value="PAS-like_dom_sf"/>
</dbReference>
<dbReference type="InterPro" id="IPR013767">
    <property type="entry name" value="PAS_fold"/>
</dbReference>
<dbReference type="NCBIfam" id="TIGR00229">
    <property type="entry name" value="sensory_box"/>
    <property type="match status" value="1"/>
</dbReference>
<dbReference type="PANTHER" id="PTHR23043">
    <property type="entry name" value="HYPOXIA-INDUCIBLE FACTOR 1 ALPHA"/>
    <property type="match status" value="1"/>
</dbReference>
<dbReference type="PANTHER" id="PTHR23043:SF18">
    <property type="entry name" value="HYPOXIA-INDUCIBLE FACTOR 3-ALPHA"/>
    <property type="match status" value="1"/>
</dbReference>
<dbReference type="Pfam" id="PF23171">
    <property type="entry name" value="bHLH_HIF1A"/>
    <property type="match status" value="1"/>
</dbReference>
<dbReference type="Pfam" id="PF11413">
    <property type="entry name" value="HIF-1"/>
    <property type="match status" value="1"/>
</dbReference>
<dbReference type="Pfam" id="PF00989">
    <property type="entry name" value="PAS"/>
    <property type="match status" value="1"/>
</dbReference>
<dbReference type="Pfam" id="PF14598">
    <property type="entry name" value="PAS_11"/>
    <property type="match status" value="1"/>
</dbReference>
<dbReference type="SMART" id="SM00353">
    <property type="entry name" value="HLH"/>
    <property type="match status" value="1"/>
</dbReference>
<dbReference type="SMART" id="SM00086">
    <property type="entry name" value="PAC"/>
    <property type="match status" value="1"/>
</dbReference>
<dbReference type="SMART" id="SM00091">
    <property type="entry name" value="PAS"/>
    <property type="match status" value="2"/>
</dbReference>
<dbReference type="SUPFAM" id="SSF47459">
    <property type="entry name" value="HLH, helix-loop-helix DNA-binding domain"/>
    <property type="match status" value="1"/>
</dbReference>
<dbReference type="SUPFAM" id="SSF55785">
    <property type="entry name" value="PYP-like sensor domain (PAS domain)"/>
    <property type="match status" value="2"/>
</dbReference>
<dbReference type="PROSITE" id="PS50888">
    <property type="entry name" value="BHLH"/>
    <property type="match status" value="1"/>
</dbReference>
<dbReference type="PROSITE" id="PS50112">
    <property type="entry name" value="PAS"/>
    <property type="match status" value="2"/>
</dbReference>
<keyword id="KW-0002">3D-structure</keyword>
<keyword id="KW-0025">Alternative splicing</keyword>
<keyword id="KW-0037">Angiogenesis</keyword>
<keyword id="KW-0053">Apoptosis</keyword>
<keyword id="KW-0963">Cytoplasm</keyword>
<keyword id="KW-0217">Developmental protein</keyword>
<keyword id="KW-0379">Hydroxylation</keyword>
<keyword id="KW-1017">Isopeptide bond</keyword>
<keyword id="KW-0496">Mitochondrion</keyword>
<keyword id="KW-0539">Nucleus</keyword>
<keyword id="KW-1185">Reference proteome</keyword>
<keyword id="KW-0677">Repeat</keyword>
<keyword id="KW-0678">Repressor</keyword>
<keyword id="KW-0346">Stress response</keyword>
<keyword id="KW-0804">Transcription</keyword>
<keyword id="KW-0805">Transcription regulation</keyword>
<keyword id="KW-0043">Tumor suppressor</keyword>
<keyword id="KW-0832">Ubl conjugation</keyword>
<feature type="chain" id="PRO_0000284414" description="Hypoxia-inducible factor 3-alpha">
    <location>
        <begin position="1"/>
        <end position="669"/>
    </location>
</feature>
<feature type="domain" description="bHLH" evidence="4">
    <location>
        <begin position="14"/>
        <end position="67"/>
    </location>
</feature>
<feature type="domain" description="PAS 1" evidence="3">
    <location>
        <begin position="82"/>
        <end position="154"/>
    </location>
</feature>
<feature type="domain" description="PAS 2" evidence="3">
    <location>
        <begin position="227"/>
        <end position="297"/>
    </location>
</feature>
<feature type="region of interest" description="Disordered" evidence="5">
    <location>
        <begin position="1"/>
        <end position="27"/>
    </location>
</feature>
<feature type="region of interest" description="Nuclear localization signal" evidence="1">
    <location>
        <begin position="77"/>
        <end position="100"/>
    </location>
</feature>
<feature type="region of interest" description="Nuclear export signal" evidence="1">
    <location>
        <begin position="230"/>
        <end position="274"/>
    </location>
</feature>
<feature type="region of interest" description="Disordered" evidence="5">
    <location>
        <begin position="354"/>
        <end position="389"/>
    </location>
</feature>
<feature type="region of interest" description="Disordered" evidence="5">
    <location>
        <begin position="430"/>
        <end position="451"/>
    </location>
</feature>
<feature type="region of interest" description="ODD">
    <location>
        <begin position="452"/>
        <end position="581"/>
    </location>
</feature>
<feature type="region of interest" description="NTAD">
    <location>
        <begin position="454"/>
        <end position="506"/>
    </location>
</feature>
<feature type="region of interest" description="Disordered" evidence="5">
    <location>
        <begin position="523"/>
        <end position="600"/>
    </location>
</feature>
<feature type="region of interest" description="Disordered" evidence="5">
    <location>
        <begin position="619"/>
        <end position="669"/>
    </location>
</feature>
<feature type="short sequence motif" description="LRRLL">
    <location>
        <begin position="414"/>
        <end position="418"/>
    </location>
</feature>
<feature type="short sequence motif" description="LAPYISMD">
    <location>
        <begin position="490"/>
        <end position="497"/>
    </location>
</feature>
<feature type="compositionally biased region" description="Basic and acidic residues" evidence="5">
    <location>
        <begin position="10"/>
        <end position="27"/>
    </location>
</feature>
<feature type="compositionally biased region" description="Polar residues" evidence="5">
    <location>
        <begin position="430"/>
        <end position="444"/>
    </location>
</feature>
<feature type="compositionally biased region" description="Low complexity" evidence="5">
    <location>
        <begin position="530"/>
        <end position="541"/>
    </location>
</feature>
<feature type="compositionally biased region" description="Low complexity" evidence="5">
    <location>
        <begin position="550"/>
        <end position="564"/>
    </location>
</feature>
<feature type="compositionally biased region" description="Low complexity" evidence="5">
    <location>
        <begin position="629"/>
        <end position="646"/>
    </location>
</feature>
<feature type="modified residue" description="4-hydroxyproline" evidence="7">
    <location>
        <position position="492"/>
    </location>
</feature>
<feature type="cross-link" description="Glycyl lysine isopeptide (Lys-Gly) (interchain with G-Cter in ubiquitin)" evidence="7">
    <location>
        <position position="467"/>
    </location>
</feature>
<feature type="cross-link" description="Glycyl lysine isopeptide (Lys-Gly) (interchain with G-Cter in ubiquitin)" evidence="7">
    <location>
        <position position="570"/>
    </location>
</feature>
<feature type="splice variant" id="VSP_043429" description="In isoform 7." evidence="17">
    <original>MALGLQRARSTTELRKEKSRDAARSRRSQETEVLYQLAHTLPFARGVSAHLDKASIMRLTISYLRMHRLCAAGEWNQVGAGGEPLDACYLKALEGFVMVLTAEGDMAYLSENVSKHLGLS</original>
    <variation>MRPAAGAARRPRCCTSWLTRCPSPAASAPTWTRPLSCASPSATCACTASAP</variation>
    <location>
        <begin position="1"/>
        <end position="120"/>
    </location>
</feature>
<feature type="splice variant" id="VSP_024518" description="In isoform 6." evidence="22">
    <location>
        <begin position="1"/>
        <end position="86"/>
    </location>
</feature>
<feature type="splice variant" id="VSP_024519" description="In isoform 5." evidence="17">
    <location>
        <begin position="1"/>
        <end position="56"/>
    </location>
</feature>
<feature type="splice variant" id="VSP_024520" description="In isoform 2." evidence="15">
    <original>MALGLQRA</original>
    <variation>MDWQDH</variation>
    <location>
        <begin position="1"/>
        <end position="8"/>
    </location>
</feature>
<feature type="splice variant" id="VSP_024521" description="In isoform 6." evidence="22">
    <original>ACYLKALEGFVMVLTAEGDMAYLSENVSKHLGLSQLELIGHSIFDFIHPCD</original>
    <variation>MRPAAGAARRPRCCTSWLTRCPSPAASAPTWTRPLSCASPSATCACTASAP</variation>
    <location>
        <begin position="87"/>
        <end position="137"/>
    </location>
</feature>
<feature type="splice variant" id="VSP_024523" description="In isoform 4." evidence="18">
    <original>LLSKGQAVTGQYRFLARSGGYLWTQTQATVVSGGRGPQSESIVCVHFLISQVEETGVVLSLEQTEQHSRRP</original>
    <variation>CMYPISPGAKPAATWPPADTRTPQLPIPQDALPPHLNTSSLLPKPQGTVSFLAPSYPVPRSFSPHLPPWWP</variation>
    <location>
        <begin position="293"/>
        <end position="363"/>
    </location>
</feature>
<feature type="splice variant" id="VSP_024525" description="In isoform 4." evidence="18">
    <location>
        <begin position="364"/>
        <end position="669"/>
    </location>
</feature>
<feature type="splice variant" id="VSP_024526" description="In isoform 3." evidence="17 20 21">
    <original>SFLLTGGPAPGSLQDPSTPLLNLNEPLGLGPSLLSPYSDEDTTQPGGPFQPRAGSAQAD</original>
    <variation>VCWGINGILWPSLPSWLKPTVL</variation>
    <location>
        <begin position="611"/>
        <end position="669"/>
    </location>
</feature>
<feature type="sequence variant" id="VAR_031731" description="In dbSNP:rs3764609." evidence="8">
    <original>Q</original>
    <variation>R</variation>
    <location>
        <position position="343"/>
    </location>
</feature>
<feature type="sequence variant" id="VAR_031732" description="In dbSNP:rs7253301.">
    <original>F</original>
    <variation>L</variation>
    <location>
        <position position="463"/>
    </location>
</feature>
<feature type="mutagenesis site" description="No loss of ubiquitination. Reduced ubiquitination; when associated with R-570." evidence="7">
    <original>K</original>
    <variation>R</variation>
    <location>
        <position position="467"/>
    </location>
</feature>
<feature type="mutagenesis site" description="Reduced hydroxylation activity. Reduced ubiquitination." evidence="7">
    <original>P</original>
    <variation>A</variation>
    <location>
        <position position="492"/>
    </location>
</feature>
<feature type="mutagenesis site" description="No loss of ubiquitination. Reduced ubiquitination; when associated with R-467." evidence="7">
    <original>K</original>
    <variation>R</variation>
    <location>
        <position position="570"/>
    </location>
</feature>
<feature type="sequence conflict" description="In Ref. 5; BAB55324." evidence="22" ref="5">
    <original>A</original>
    <variation>V</variation>
    <location>
        <position position="202"/>
    </location>
</feature>
<feature type="sequence conflict" description="In Ref. 5; BAB55324." evidence="22" ref="5">
    <original>D</original>
    <variation>G</variation>
    <location>
        <position position="497"/>
    </location>
</feature>
<feature type="strand" evidence="24">
    <location>
        <begin position="241"/>
        <end position="245"/>
    </location>
</feature>
<feature type="strand" evidence="24">
    <location>
        <begin position="250"/>
        <end position="254"/>
    </location>
</feature>
<feature type="helix" evidence="24">
    <location>
        <begin position="258"/>
        <end position="262"/>
    </location>
</feature>
<feature type="helix" evidence="24">
    <location>
        <begin position="266"/>
        <end position="269"/>
    </location>
</feature>
<feature type="helix" evidence="24">
    <location>
        <begin position="274"/>
        <end position="277"/>
    </location>
</feature>
<feature type="turn" evidence="24">
    <location>
        <begin position="280"/>
        <end position="282"/>
    </location>
</feature>
<feature type="helix" evidence="24">
    <location>
        <begin position="283"/>
        <end position="296"/>
    </location>
</feature>
<feature type="strand" evidence="24">
    <location>
        <begin position="297"/>
        <end position="300"/>
    </location>
</feature>
<feature type="strand" evidence="24">
    <location>
        <begin position="304"/>
        <end position="307"/>
    </location>
</feature>
<feature type="strand" evidence="24">
    <location>
        <begin position="313"/>
        <end position="323"/>
    </location>
</feature>
<feature type="helix" evidence="24">
    <location>
        <begin position="329"/>
        <end position="331"/>
    </location>
</feature>
<feature type="strand" evidence="24">
    <location>
        <begin position="333"/>
        <end position="342"/>
    </location>
</feature>
<organism>
    <name type="scientific">Homo sapiens</name>
    <name type="common">Human</name>
    <dbReference type="NCBI Taxonomy" id="9606"/>
    <lineage>
        <taxon>Eukaryota</taxon>
        <taxon>Metazoa</taxon>
        <taxon>Chordata</taxon>
        <taxon>Craniata</taxon>
        <taxon>Vertebrata</taxon>
        <taxon>Euteleostomi</taxon>
        <taxon>Mammalia</taxon>
        <taxon>Eutheria</taxon>
        <taxon>Euarchontoglires</taxon>
        <taxon>Primates</taxon>
        <taxon>Haplorrhini</taxon>
        <taxon>Catarrhini</taxon>
        <taxon>Hominidae</taxon>
        <taxon>Homo</taxon>
    </lineage>
</organism>
<reference key="1">
    <citation type="journal article" date="2001" name="Biochem. Biophys. Res. Commun.">
        <title>Expression and characterization of hypoxia-inducible factor (HIF)-3alpha in human kidney: suppression of HIF-mediated gene expression by HIF-3alpha.</title>
        <authorList>
            <person name="Hara S."/>
            <person name="Hamada J."/>
            <person name="Kobayashi C."/>
            <person name="Kondo Y."/>
            <person name="Imura N."/>
        </authorList>
    </citation>
    <scope>NUCLEOTIDE SEQUENCE [MRNA] (ISOFORM 2)</scope>
    <scope>FUNCTION (ISOFORM 2)</scope>
    <scope>TISSUE SPECIFICITY</scope>
    <source>
        <tissue>Kidney</tissue>
    </source>
</reference>
<reference key="2">
    <citation type="submission" date="2001-12" db="EMBL/GenBank/DDBJ databases">
        <title>Cloning and characterization of human inhibitory PAS domain protein.</title>
        <authorList>
            <person name="Cheng J.Q."/>
        </authorList>
    </citation>
    <scope>NUCLEOTIDE SEQUENCE [MRNA] (ISOFORM 3)</scope>
</reference>
<reference key="3">
    <citation type="journal article" date="2005" name="FASEB J.">
        <title>Human HIF-3alpha4 is a dominant-negative regulator of HIF-1 and is down-regulated in renal cell carcinoma.</title>
        <authorList>
            <person name="Maynard M.A."/>
            <person name="Evans A.J."/>
            <person name="Hosomi T."/>
            <person name="Hara S."/>
            <person name="Jewett M.A."/>
            <person name="Ohh M."/>
        </authorList>
    </citation>
    <scope>NUCLEOTIDE SEQUENCE [MRNA] (ISOFORM 4)</scope>
    <scope>FUNCTION (ISOFORM 4)</scope>
    <scope>INTERACTION WITH HIF1A AND ARNT (ISOFORM 4)</scope>
    <scope>INDUCTION (ISOFORM 4)</scope>
    <scope>TISSUE SPECIFICITY</scope>
    <source>
        <tissue>Cerebellum</tissue>
    </source>
</reference>
<reference key="4">
    <citation type="submission" date="2007-02" db="EMBL/GenBank/DDBJ databases">
        <title>HIF-3alpha2, one of splicing variants of human hypoxia-inducible factor-3alpha, functions as an inhibitor of hypoxia-induced gene expression and tumor growth.</title>
        <authorList>
            <person name="Hara S."/>
            <person name="Hosomi T."/>
            <person name="Mita M."/>
            <person name="Sakaue M."/>
            <person name="Kondo Y."/>
        </authorList>
    </citation>
    <scope>NUCLEOTIDE SEQUENCE [MRNA] (ISOFORM 3)</scope>
    <source>
        <tissue>Kidney</tissue>
    </source>
</reference>
<reference key="5">
    <citation type="journal article" date="2004" name="Nat. Genet.">
        <title>Complete sequencing and characterization of 21,243 full-length human cDNAs.</title>
        <authorList>
            <person name="Ota T."/>
            <person name="Suzuki Y."/>
            <person name="Nishikawa T."/>
            <person name="Otsuki T."/>
            <person name="Sugiyama T."/>
            <person name="Irie R."/>
            <person name="Wakamatsu A."/>
            <person name="Hayashi K."/>
            <person name="Sato H."/>
            <person name="Nagai K."/>
            <person name="Kimura K."/>
            <person name="Makita H."/>
            <person name="Sekine M."/>
            <person name="Obayashi M."/>
            <person name="Nishi T."/>
            <person name="Shibahara T."/>
            <person name="Tanaka T."/>
            <person name="Ishii S."/>
            <person name="Yamamoto J."/>
            <person name="Saito K."/>
            <person name="Kawai Y."/>
            <person name="Isono Y."/>
            <person name="Nakamura Y."/>
            <person name="Nagahari K."/>
            <person name="Murakami K."/>
            <person name="Yasuda T."/>
            <person name="Iwayanagi T."/>
            <person name="Wagatsuma M."/>
            <person name="Shiratori A."/>
            <person name="Sudo H."/>
            <person name="Hosoiri T."/>
            <person name="Kaku Y."/>
            <person name="Kodaira H."/>
            <person name="Kondo H."/>
            <person name="Sugawara M."/>
            <person name="Takahashi M."/>
            <person name="Kanda K."/>
            <person name="Yokoi T."/>
            <person name="Furuya T."/>
            <person name="Kikkawa E."/>
            <person name="Omura Y."/>
            <person name="Abe K."/>
            <person name="Kamihara K."/>
            <person name="Katsuta N."/>
            <person name="Sato K."/>
            <person name="Tanikawa M."/>
            <person name="Yamazaki M."/>
            <person name="Ninomiya K."/>
            <person name="Ishibashi T."/>
            <person name="Yamashita H."/>
            <person name="Murakawa K."/>
            <person name="Fujimori K."/>
            <person name="Tanai H."/>
            <person name="Kimata M."/>
            <person name="Watanabe M."/>
            <person name="Hiraoka S."/>
            <person name="Chiba Y."/>
            <person name="Ishida S."/>
            <person name="Ono Y."/>
            <person name="Takiguchi S."/>
            <person name="Watanabe S."/>
            <person name="Yosida M."/>
            <person name="Hotuta T."/>
            <person name="Kusano J."/>
            <person name="Kanehori K."/>
            <person name="Takahashi-Fujii A."/>
            <person name="Hara H."/>
            <person name="Tanase T.-O."/>
            <person name="Nomura Y."/>
            <person name="Togiya S."/>
            <person name="Komai F."/>
            <person name="Hara R."/>
            <person name="Takeuchi K."/>
            <person name="Arita M."/>
            <person name="Imose N."/>
            <person name="Musashino K."/>
            <person name="Yuuki H."/>
            <person name="Oshima A."/>
            <person name="Sasaki N."/>
            <person name="Aotsuka S."/>
            <person name="Yoshikawa Y."/>
            <person name="Matsunawa H."/>
            <person name="Ichihara T."/>
            <person name="Shiohata N."/>
            <person name="Sano S."/>
            <person name="Moriya S."/>
            <person name="Momiyama H."/>
            <person name="Satoh N."/>
            <person name="Takami S."/>
            <person name="Terashima Y."/>
            <person name="Suzuki O."/>
            <person name="Nakagawa S."/>
            <person name="Senoh A."/>
            <person name="Mizoguchi H."/>
            <person name="Goto Y."/>
            <person name="Shimizu F."/>
            <person name="Wakebe H."/>
            <person name="Hishigaki H."/>
            <person name="Watanabe T."/>
            <person name="Sugiyama A."/>
            <person name="Takemoto M."/>
            <person name="Kawakami B."/>
            <person name="Yamazaki M."/>
            <person name="Watanabe K."/>
            <person name="Kumagai A."/>
            <person name="Itakura S."/>
            <person name="Fukuzumi Y."/>
            <person name="Fujimori Y."/>
            <person name="Komiyama M."/>
            <person name="Tashiro H."/>
            <person name="Tanigami A."/>
            <person name="Fujiwara T."/>
            <person name="Ono T."/>
            <person name="Yamada K."/>
            <person name="Fujii Y."/>
            <person name="Ozaki K."/>
            <person name="Hirao M."/>
            <person name="Ohmori Y."/>
            <person name="Kawabata A."/>
            <person name="Hikiji T."/>
            <person name="Kobatake N."/>
            <person name="Inagaki H."/>
            <person name="Ikema Y."/>
            <person name="Okamoto S."/>
            <person name="Okitani R."/>
            <person name="Kawakami T."/>
            <person name="Noguchi S."/>
            <person name="Itoh T."/>
            <person name="Shigeta K."/>
            <person name="Senba T."/>
            <person name="Matsumura K."/>
            <person name="Nakajima Y."/>
            <person name="Mizuno T."/>
            <person name="Morinaga M."/>
            <person name="Sasaki M."/>
            <person name="Togashi T."/>
            <person name="Oyama M."/>
            <person name="Hata H."/>
            <person name="Watanabe M."/>
            <person name="Komatsu T."/>
            <person name="Mizushima-Sugano J."/>
            <person name="Satoh T."/>
            <person name="Shirai Y."/>
            <person name="Takahashi Y."/>
            <person name="Nakagawa K."/>
            <person name="Okumura K."/>
            <person name="Nagase T."/>
            <person name="Nomura N."/>
            <person name="Kikuchi H."/>
            <person name="Masuho Y."/>
            <person name="Yamashita R."/>
            <person name="Nakai K."/>
            <person name="Yada T."/>
            <person name="Nakamura Y."/>
            <person name="Ohara O."/>
            <person name="Isogai T."/>
            <person name="Sugano S."/>
        </authorList>
    </citation>
    <scope>NUCLEOTIDE SEQUENCE [LARGE SCALE MRNA] (ISOFORMS 3 AND 7)</scope>
    <scope>NUCLEOTIDE SEQUENCE [LARGE SCALE MRNA] OF 1-626 (ISOFORM 5)</scope>
    <scope>NUCLEOTIDE SEQUENCE [LARGE SCALE MRNA] OF 1-233 (ISOFORM 6)</scope>
    <scope>VARIANT ARG-343</scope>
    <source>
        <tissue>Embryo</tissue>
        <tissue>Heart</tissue>
        <tissue>Ovary</tissue>
    </source>
</reference>
<reference key="6">
    <citation type="journal article" date="2004" name="Nature">
        <title>The DNA sequence and biology of human chromosome 19.</title>
        <authorList>
            <person name="Grimwood J."/>
            <person name="Gordon L.A."/>
            <person name="Olsen A.S."/>
            <person name="Terry A."/>
            <person name="Schmutz J."/>
            <person name="Lamerdin J.E."/>
            <person name="Hellsten U."/>
            <person name="Goodstein D."/>
            <person name="Couronne O."/>
            <person name="Tran-Gyamfi M."/>
            <person name="Aerts A."/>
            <person name="Altherr M."/>
            <person name="Ashworth L."/>
            <person name="Bajorek E."/>
            <person name="Black S."/>
            <person name="Branscomb E."/>
            <person name="Caenepeel S."/>
            <person name="Carrano A.V."/>
            <person name="Caoile C."/>
            <person name="Chan Y.M."/>
            <person name="Christensen M."/>
            <person name="Cleland C.A."/>
            <person name="Copeland A."/>
            <person name="Dalin E."/>
            <person name="Dehal P."/>
            <person name="Denys M."/>
            <person name="Detter J.C."/>
            <person name="Escobar J."/>
            <person name="Flowers D."/>
            <person name="Fotopulos D."/>
            <person name="Garcia C."/>
            <person name="Georgescu A.M."/>
            <person name="Glavina T."/>
            <person name="Gomez M."/>
            <person name="Gonzales E."/>
            <person name="Groza M."/>
            <person name="Hammon N."/>
            <person name="Hawkins T."/>
            <person name="Haydu L."/>
            <person name="Ho I."/>
            <person name="Huang W."/>
            <person name="Israni S."/>
            <person name="Jett J."/>
            <person name="Kadner K."/>
            <person name="Kimball H."/>
            <person name="Kobayashi A."/>
            <person name="Larionov V."/>
            <person name="Leem S.-H."/>
            <person name="Lopez F."/>
            <person name="Lou Y."/>
            <person name="Lowry S."/>
            <person name="Malfatti S."/>
            <person name="Martinez D."/>
            <person name="McCready P.M."/>
            <person name="Medina C."/>
            <person name="Morgan J."/>
            <person name="Nelson K."/>
            <person name="Nolan M."/>
            <person name="Ovcharenko I."/>
            <person name="Pitluck S."/>
            <person name="Pollard M."/>
            <person name="Popkie A.P."/>
            <person name="Predki P."/>
            <person name="Quan G."/>
            <person name="Ramirez L."/>
            <person name="Rash S."/>
            <person name="Retterer J."/>
            <person name="Rodriguez A."/>
            <person name="Rogers S."/>
            <person name="Salamov A."/>
            <person name="Salazar A."/>
            <person name="She X."/>
            <person name="Smith D."/>
            <person name="Slezak T."/>
            <person name="Solovyev V."/>
            <person name="Thayer N."/>
            <person name="Tice H."/>
            <person name="Tsai M."/>
            <person name="Ustaszewska A."/>
            <person name="Vo N."/>
            <person name="Wagner M."/>
            <person name="Wheeler J."/>
            <person name="Wu K."/>
            <person name="Xie G."/>
            <person name="Yang J."/>
            <person name="Dubchak I."/>
            <person name="Furey T.S."/>
            <person name="DeJong P."/>
            <person name="Dickson M."/>
            <person name="Gordon D."/>
            <person name="Eichler E.E."/>
            <person name="Pennacchio L.A."/>
            <person name="Richardson P."/>
            <person name="Stubbs L."/>
            <person name="Rokhsar D.S."/>
            <person name="Myers R.M."/>
            <person name="Rubin E.M."/>
            <person name="Lucas S.M."/>
        </authorList>
    </citation>
    <scope>NUCLEOTIDE SEQUENCE [LARGE SCALE GENOMIC DNA]</scope>
</reference>
<reference key="7">
    <citation type="submission" date="2005-07" db="EMBL/GenBank/DDBJ databases">
        <authorList>
            <person name="Mural R.J."/>
            <person name="Istrail S."/>
            <person name="Sutton G."/>
            <person name="Florea L."/>
            <person name="Halpern A.L."/>
            <person name="Mobarry C.M."/>
            <person name="Lippert R."/>
            <person name="Walenz B."/>
            <person name="Shatkay H."/>
            <person name="Dew I."/>
            <person name="Miller J.R."/>
            <person name="Flanigan M.J."/>
            <person name="Edwards N.J."/>
            <person name="Bolanos R."/>
            <person name="Fasulo D."/>
            <person name="Halldorsson B.V."/>
            <person name="Hannenhalli S."/>
            <person name="Turner R."/>
            <person name="Yooseph S."/>
            <person name="Lu F."/>
            <person name="Nusskern D.R."/>
            <person name="Shue B.C."/>
            <person name="Zheng X.H."/>
            <person name="Zhong F."/>
            <person name="Delcher A.L."/>
            <person name="Huson D.H."/>
            <person name="Kravitz S.A."/>
            <person name="Mouchard L."/>
            <person name="Reinert K."/>
            <person name="Remington K.A."/>
            <person name="Clark A.G."/>
            <person name="Waterman M.S."/>
            <person name="Eichler E.E."/>
            <person name="Adams M.D."/>
            <person name="Hunkapiller M.W."/>
            <person name="Myers E.W."/>
            <person name="Venter J.C."/>
        </authorList>
    </citation>
    <scope>NUCLEOTIDE SEQUENCE [LARGE SCALE GENOMIC DNA]</scope>
</reference>
<reference key="8">
    <citation type="journal article" date="2004" name="Genome Res.">
        <title>The status, quality, and expansion of the NIH full-length cDNA project: the Mammalian Gene Collection (MGC).</title>
        <authorList>
            <consortium name="The MGC Project Team"/>
        </authorList>
    </citation>
    <scope>NUCLEOTIDE SEQUENCE [LARGE SCALE MRNA] (ISOFORMS 1 AND 4)</scope>
    <scope>VARIANT ARG-343</scope>
    <source>
        <tissue>Brain</tissue>
        <tissue>Pancreas</tissue>
    </source>
</reference>
<reference key="9">
    <citation type="journal article" date="2003" name="J. Biol. Chem.">
        <title>Multiple splice variants of the human HIF-3 alpha locus are targets of the von Hippel-Lindau E3 ubiquitin ligase complex.</title>
        <authorList>
            <person name="Maynard M.A."/>
            <person name="Qi H."/>
            <person name="Chung J."/>
            <person name="Lee E.H."/>
            <person name="Kondo Y."/>
            <person name="Hara S."/>
            <person name="Conaway R.C."/>
            <person name="Conaway J.W."/>
            <person name="Ohh M."/>
        </authorList>
    </citation>
    <scope>INTERACTION WITH VHL (ISOFORM 2)</scope>
    <scope>ALTERNATIVE SPLICING</scope>
    <scope>UBIQUITINATION AT LYS-467 AND LYS-570</scope>
    <scope>HYDROXYLATION AT PRO-492</scope>
    <scope>TISSUE SPECIFICITY</scope>
    <scope>MUTAGENESIS OF LYS-467; PRO-492 AND LYS-570</scope>
</reference>
<reference key="10">
    <citation type="journal article" date="2006" name="Cell Res.">
        <title>Hypoxia upregulates hypoxia inducible factor (HIF)-3alpha expression in lung epithelial cells: characterization and comparison with HIF-1alpha.</title>
        <authorList>
            <person name="Li Q.F."/>
            <person name="Wang X.R."/>
            <person name="Yang Y.W."/>
            <person name="Lin H."/>
        </authorList>
    </citation>
    <scope>SUBCELLULAR LOCATION</scope>
    <scope>TISSUE SPECIFICITY</scope>
    <scope>INDUCTION</scope>
</reference>
<reference key="11">
    <citation type="journal article" date="2007" name="Cell Cycle">
        <title>Dominant-negative HIF-3 alpha 4 suppresses VHL-null renal cell carcinoma progression.</title>
        <authorList>
            <person name="Maynard M.A."/>
            <person name="Evans A.J."/>
            <person name="Shi W."/>
            <person name="Kim W.Y."/>
            <person name="Liu F.F."/>
            <person name="Ohh M."/>
        </authorList>
    </citation>
    <scope>FUNCTION (ISOFORM 4)</scope>
    <scope>INTERACTION WITH EPAS1 (ISOFORM 4)</scope>
</reference>
<reference key="12">
    <citation type="journal article" date="2009" name="Biochem. J.">
        <title>The human HIF (hypoxia-inducible factor)-3alpha gene is a HIF-1 target gene and may modulate hypoxic gene induction.</title>
        <authorList>
            <person name="Tanaka T."/>
            <person name="Wiesener M."/>
            <person name="Bernhardt W."/>
            <person name="Eckardt K.U."/>
            <person name="Warnecke C."/>
        </authorList>
    </citation>
    <scope>FUNCTION (ISOFORMS 3 AND 4)</scope>
    <scope>SUBCELLULAR LOCATION</scope>
    <scope>INDUCTION</scope>
    <scope>TISSUE SPECIFICITY</scope>
</reference>
<reference key="13">
    <citation type="journal article" date="2010" name="Int. J. Biochem. Cell Biol.">
        <title>Hypoxia-inducible factor (HIF)-3alpha is subject to extensive alternative splicing in human tissues and cancer cells and is regulated by HIF-1 but not HIF-2.</title>
        <authorList>
            <person name="Pasanen A."/>
            <person name="Heikkila M."/>
            <person name="Rautavuoma K."/>
            <person name="Hirsila M."/>
            <person name="Kivirikko K.I."/>
            <person name="Myllyharju J."/>
        </authorList>
    </citation>
    <scope>FUNCTION (ISOFORMS 3 AND 4)</scope>
    <scope>ALTERNATIVE SPLICING</scope>
    <scope>TISSUE SPECIFICITY (ISOFORMS 2; 3 AND 4)</scope>
    <scope>INDUCTION</scope>
</reference>
<reference key="14">
    <citation type="journal article" date="2011" name="Cell. Mol. Life Sci.">
        <title>Cell-specific and hypoxia-dependent regulation of human HIF-3alpha: inhibition of the expression of HIF target genes in vascular cells.</title>
        <authorList>
            <person name="Augstein A."/>
            <person name="Poitz D.M."/>
            <person name="Braun-Dullaeus R.C."/>
            <person name="Strasser R.H."/>
            <person name="Schmeisser A."/>
        </authorList>
    </citation>
    <scope>FUNCTION (ISOFORMS 3 AND 5)</scope>
    <scope>TISSUE SPECIFICITY</scope>
    <scope>INDUCTION (ISOFORMS 2; 3 AND 5)</scope>
</reference>